<gene>
    <name type="primary">Gadd45a</name>
    <name type="synonym">Ddit1</name>
    <name type="synonym">Gadd45</name>
</gene>
<proteinExistence type="evidence at protein level"/>
<organism>
    <name type="scientific">Mus musculus</name>
    <name type="common">Mouse</name>
    <dbReference type="NCBI Taxonomy" id="10090"/>
    <lineage>
        <taxon>Eukaryota</taxon>
        <taxon>Metazoa</taxon>
        <taxon>Chordata</taxon>
        <taxon>Craniata</taxon>
        <taxon>Vertebrata</taxon>
        <taxon>Euteleostomi</taxon>
        <taxon>Mammalia</taxon>
        <taxon>Eutheria</taxon>
        <taxon>Euarchontoglires</taxon>
        <taxon>Glires</taxon>
        <taxon>Rodentia</taxon>
        <taxon>Myomorpha</taxon>
        <taxon>Muroidea</taxon>
        <taxon>Muridae</taxon>
        <taxon>Murinae</taxon>
        <taxon>Mus</taxon>
        <taxon>Mus</taxon>
    </lineage>
</organism>
<name>GA45A_MOUSE</name>
<dbReference type="EMBL" id="L28177">
    <property type="protein sequence ID" value="AAA37656.1"/>
    <property type="molecule type" value="mRNA"/>
</dbReference>
<dbReference type="EMBL" id="U00937">
    <property type="protein sequence ID" value="AAC27351.1"/>
    <property type="molecule type" value="Unassigned_DNA"/>
</dbReference>
<dbReference type="EMBL" id="BC011141">
    <property type="protein sequence ID" value="AAH11141.1"/>
    <property type="molecule type" value="mRNA"/>
</dbReference>
<dbReference type="CCDS" id="CCDS20217.1"/>
<dbReference type="PIR" id="B56535">
    <property type="entry name" value="B56535"/>
</dbReference>
<dbReference type="RefSeq" id="NP_031862.1">
    <property type="nucleotide sequence ID" value="NM_007836.1"/>
</dbReference>
<dbReference type="SMR" id="P48316"/>
<dbReference type="BioGRID" id="199077">
    <property type="interactions" value="6"/>
</dbReference>
<dbReference type="FunCoup" id="P48316">
    <property type="interactions" value="2815"/>
</dbReference>
<dbReference type="IntAct" id="P48316">
    <property type="interactions" value="1"/>
</dbReference>
<dbReference type="STRING" id="10090.ENSMUSP00000044034"/>
<dbReference type="PhosphoSitePlus" id="P48316"/>
<dbReference type="PaxDb" id="10090-ENSMUSP00000044034"/>
<dbReference type="ProteomicsDB" id="265726"/>
<dbReference type="Antibodypedia" id="33411">
    <property type="antibodies" value="419 antibodies from 34 providers"/>
</dbReference>
<dbReference type="DNASU" id="13197"/>
<dbReference type="Ensembl" id="ENSMUST00000043098.9">
    <property type="protein sequence ID" value="ENSMUSP00000044034.7"/>
    <property type="gene ID" value="ENSMUSG00000036390.9"/>
</dbReference>
<dbReference type="GeneID" id="13197"/>
<dbReference type="KEGG" id="mmu:13197"/>
<dbReference type="UCSC" id="uc009cfc.1">
    <property type="organism name" value="mouse"/>
</dbReference>
<dbReference type="AGR" id="MGI:107799"/>
<dbReference type="CTD" id="1647"/>
<dbReference type="MGI" id="MGI:107799">
    <property type="gene designation" value="Gadd45a"/>
</dbReference>
<dbReference type="VEuPathDB" id="HostDB:ENSMUSG00000036390"/>
<dbReference type="eggNOG" id="ENOG502RY8P">
    <property type="taxonomic scope" value="Eukaryota"/>
</dbReference>
<dbReference type="GeneTree" id="ENSGT00950000182964"/>
<dbReference type="HOGENOM" id="CLU_118164_0_0_1"/>
<dbReference type="InParanoid" id="P48316"/>
<dbReference type="OMA" id="FRMTFEE"/>
<dbReference type="OrthoDB" id="5976967at2759"/>
<dbReference type="PhylomeDB" id="P48316"/>
<dbReference type="TreeFam" id="TF300196"/>
<dbReference type="Reactome" id="R-MMU-6804114">
    <property type="pathway name" value="TP53 Regulates Transcription of Genes Involved in G2 Cell Cycle Arrest"/>
</dbReference>
<dbReference type="BioGRID-ORCS" id="13197">
    <property type="hits" value="8 hits in 79 CRISPR screens"/>
</dbReference>
<dbReference type="PRO" id="PR:P48316"/>
<dbReference type="Proteomes" id="UP000000589">
    <property type="component" value="Chromosome 6"/>
</dbReference>
<dbReference type="RNAct" id="P48316">
    <property type="molecule type" value="protein"/>
</dbReference>
<dbReference type="Bgee" id="ENSMUSG00000036390">
    <property type="expression patterns" value="Expressed in granulocyte and 264 other cell types or tissues"/>
</dbReference>
<dbReference type="ExpressionAtlas" id="P48316">
    <property type="expression patterns" value="baseline and differential"/>
</dbReference>
<dbReference type="GO" id="GO:0005737">
    <property type="term" value="C:cytoplasm"/>
    <property type="evidence" value="ECO:0007669"/>
    <property type="project" value="Ensembl"/>
</dbReference>
<dbReference type="GO" id="GO:0016607">
    <property type="term" value="C:nuclear speck"/>
    <property type="evidence" value="ECO:0007669"/>
    <property type="project" value="Ensembl"/>
</dbReference>
<dbReference type="GO" id="GO:0005634">
    <property type="term" value="C:nucleus"/>
    <property type="evidence" value="ECO:0000314"/>
    <property type="project" value="MGI"/>
</dbReference>
<dbReference type="GO" id="GO:0019900">
    <property type="term" value="F:kinase binding"/>
    <property type="evidence" value="ECO:0007669"/>
    <property type="project" value="Ensembl"/>
</dbReference>
<dbReference type="GO" id="GO:1990841">
    <property type="term" value="F:promoter-specific chromatin binding"/>
    <property type="evidence" value="ECO:0000314"/>
    <property type="project" value="MGI"/>
</dbReference>
<dbReference type="GO" id="GO:0046982">
    <property type="term" value="F:protein heterodimerization activity"/>
    <property type="evidence" value="ECO:0007669"/>
    <property type="project" value="Ensembl"/>
</dbReference>
<dbReference type="GO" id="GO:0042803">
    <property type="term" value="F:protein homodimerization activity"/>
    <property type="evidence" value="ECO:0007669"/>
    <property type="project" value="Ensembl"/>
</dbReference>
<dbReference type="GO" id="GO:0071479">
    <property type="term" value="P:cellular response to ionizing radiation"/>
    <property type="evidence" value="ECO:0007669"/>
    <property type="project" value="Ensembl"/>
</dbReference>
<dbReference type="GO" id="GO:0071260">
    <property type="term" value="P:cellular response to mechanical stimulus"/>
    <property type="evidence" value="ECO:0007669"/>
    <property type="project" value="Ensembl"/>
</dbReference>
<dbReference type="GO" id="GO:0007098">
    <property type="term" value="P:centrosome cycle"/>
    <property type="evidence" value="ECO:0000316"/>
    <property type="project" value="MGI"/>
</dbReference>
<dbReference type="GO" id="GO:0016525">
    <property type="term" value="P:negative regulation of angiogenesis"/>
    <property type="evidence" value="ECO:0000315"/>
    <property type="project" value="CACAO"/>
</dbReference>
<dbReference type="GO" id="GO:0043537">
    <property type="term" value="P:negative regulation of blood vessel endothelial cell migration"/>
    <property type="evidence" value="ECO:0000315"/>
    <property type="project" value="CACAO"/>
</dbReference>
<dbReference type="GO" id="GO:0033140">
    <property type="term" value="P:negative regulation of peptidyl-serine phosphorylation of STAT protein"/>
    <property type="evidence" value="ECO:0000315"/>
    <property type="project" value="CACAO"/>
</dbReference>
<dbReference type="GO" id="GO:0000122">
    <property type="term" value="P:negative regulation of transcription by RNA polymerase II"/>
    <property type="evidence" value="ECO:0007669"/>
    <property type="project" value="Ensembl"/>
</dbReference>
<dbReference type="GO" id="GO:0043065">
    <property type="term" value="P:positive regulation of apoptotic process"/>
    <property type="evidence" value="ECO:0007669"/>
    <property type="project" value="Ensembl"/>
</dbReference>
<dbReference type="GO" id="GO:0046330">
    <property type="term" value="P:positive regulation of JNK cascade"/>
    <property type="evidence" value="ECO:0007669"/>
    <property type="project" value="Ensembl"/>
</dbReference>
<dbReference type="GO" id="GO:1900745">
    <property type="term" value="P:positive regulation of p38MAPK cascade"/>
    <property type="evidence" value="ECO:0007669"/>
    <property type="project" value="Ensembl"/>
</dbReference>
<dbReference type="GO" id="GO:2000379">
    <property type="term" value="P:positive regulation of reactive oxygen species metabolic process"/>
    <property type="evidence" value="ECO:0007669"/>
    <property type="project" value="Ensembl"/>
</dbReference>
<dbReference type="GO" id="GO:0051726">
    <property type="term" value="P:regulation of cell cycle"/>
    <property type="evidence" value="ECO:0000314"/>
    <property type="project" value="MGI"/>
</dbReference>
<dbReference type="GO" id="GO:0042770">
    <property type="term" value="P:signal transduction in response to DNA damage"/>
    <property type="evidence" value="ECO:0007669"/>
    <property type="project" value="Ensembl"/>
</dbReference>
<dbReference type="FunFam" id="3.30.1330.30:FF:000012">
    <property type="entry name" value="growth arrest and DNA damage-inducible protein GADD45 alpha"/>
    <property type="match status" value="1"/>
</dbReference>
<dbReference type="Gene3D" id="3.30.1330.30">
    <property type="match status" value="1"/>
</dbReference>
<dbReference type="InterPro" id="IPR024824">
    <property type="entry name" value="GADD45"/>
</dbReference>
<dbReference type="InterPro" id="IPR029064">
    <property type="entry name" value="Ribosomal_eL30-like_sf"/>
</dbReference>
<dbReference type="InterPro" id="IPR004038">
    <property type="entry name" value="Ribosomal_eL8/eL30/eS12/Gad45"/>
</dbReference>
<dbReference type="PANTHER" id="PTHR10411">
    <property type="entry name" value="GROWTH ARREST AND DNA DAMAGE-INDUCIBLE PROTEIN GADD45"/>
    <property type="match status" value="1"/>
</dbReference>
<dbReference type="PANTHER" id="PTHR10411:SF3">
    <property type="entry name" value="GROWTH ARREST AND DNA DAMAGE-INDUCIBLE PROTEIN GADD45 ALPHA"/>
    <property type="match status" value="1"/>
</dbReference>
<dbReference type="Pfam" id="PF01248">
    <property type="entry name" value="Ribosomal_L7Ae"/>
    <property type="match status" value="1"/>
</dbReference>
<dbReference type="SUPFAM" id="SSF55315">
    <property type="entry name" value="L30e-like"/>
    <property type="match status" value="1"/>
</dbReference>
<evidence type="ECO:0000250" key="1"/>
<evidence type="ECO:0000250" key="2">
    <source>
        <dbReference type="UniProtKB" id="P24522"/>
    </source>
</evidence>
<evidence type="ECO:0000269" key="3">
    <source>
    </source>
</evidence>
<evidence type="ECO:0000305" key="4"/>
<protein>
    <recommendedName>
        <fullName>Growth arrest and DNA damage-inducible protein GADD45 alpha</fullName>
    </recommendedName>
    <alternativeName>
        <fullName>DNA damage-inducible transcript 1 protein</fullName>
        <shortName>DDIT-1</shortName>
    </alternativeName>
</protein>
<sequence length="165" mass="18339">MTLEEFSAAEQKTERMDTVGDALEEVLSKARSQRTITVGVYEAAKLLNVDPDNVVLCLLAADEDDDRDVALQIHFTLIRAFCCENDINILRVSNPGRLAELLLLENDAGPAESGGAAQTPDLHCVLVTNPHSSQWKDPALSQLICFCRESRYMDQWVPVINLPER</sequence>
<keyword id="KW-0131">Cell cycle</keyword>
<keyword id="KW-0227">DNA damage</keyword>
<keyword id="KW-0338">Growth arrest</keyword>
<keyword id="KW-0539">Nucleus</keyword>
<keyword id="KW-0597">Phosphoprotein</keyword>
<keyword id="KW-1185">Reference proteome</keyword>
<feature type="chain" id="PRO_0000148332" description="Growth arrest and DNA damage-inducible protein GADD45 alpha">
    <location>
        <begin position="1"/>
        <end position="165"/>
    </location>
</feature>
<feature type="modified residue" description="Phosphothreonine" evidence="2">
    <location>
        <position position="2"/>
    </location>
</feature>
<reference key="1">
    <citation type="journal article" date="1994" name="Mol. Cell. Biol.">
        <title>The gadd and MyD genes define a novel set of mammalian genes encoding acidic proteins that synergistically suppress cell growth.</title>
        <authorList>
            <person name="Zhan Q."/>
            <person name="Lord K.A."/>
            <person name="Alamo I. Jr."/>
            <person name="Hollander M.C."/>
            <person name="Carrier F."/>
            <person name="Ron D."/>
            <person name="Kohn K.W."/>
            <person name="Hoffman B."/>
            <person name="Liebermann D.A."/>
            <person name="Fornace A.J. Jr."/>
        </authorList>
    </citation>
    <scope>NUCLEOTIDE SEQUENCE [MRNA]</scope>
    <source>
        <strain>129/Sv</strain>
        <tissue>Liver</tissue>
    </source>
</reference>
<reference key="2">
    <citation type="journal article" date="1993" name="Dokl. Akad. Nauk">
        <title>Cloning and characteristics of murine genes coding for the human GADD45 analog -- a protein induced in response to DNA damage.</title>
        <authorList>
            <person name="Alimzhanov M.B."/>
            <person name="Kuprash D.V."/>
            <person name="Turetskaya R.L."/>
            <person name="Osipovich O.A."/>
            <person name="Borodulina O.R."/>
            <person name="Osovskaia V.S."/>
            <person name="Chumakov R.M."/>
            <person name="Nedospasov S.A."/>
        </authorList>
    </citation>
    <scope>NUCLEOTIDE SEQUENCE</scope>
    <source>
        <strain>129/Sv</strain>
        <tissue>Liver</tissue>
    </source>
</reference>
<reference key="3">
    <citation type="journal article" date="2004" name="Genome Res.">
        <title>The status, quality, and expansion of the NIH full-length cDNA project: the Mammalian Gene Collection (MGC).</title>
        <authorList>
            <consortium name="The MGC Project Team"/>
        </authorList>
    </citation>
    <scope>NUCLEOTIDE SEQUENCE [LARGE SCALE MRNA]</scope>
    <source>
        <strain>C57BL/6J</strain>
        <tissue>Mammary gland</tissue>
    </source>
</reference>
<reference key="4">
    <citation type="journal article" date="2005" name="Nat. Immunol.">
        <title>The autoimmune suppressor Gadd45alpha inhibits the T cell alternative p38 activation pathway.</title>
        <authorList>
            <person name="Salvador J.M."/>
            <person name="Mittelstadt P.R."/>
            <person name="Belova G.I."/>
            <person name="Fornace A.J. Jr."/>
            <person name="Ashwell J.D."/>
        </authorList>
    </citation>
    <scope>INTERACTION WITH MAPK14</scope>
    <scope>FUNCTION</scope>
</reference>
<comment type="function">
    <text evidence="3">Might affect PCNA interaction with some CDK (cell division protein kinase) complexes; stimulates DNA excision repair in vitro and inhibits entry of cells into S phase. In T-cells, functions as a regulator of p38 MAPKs by inhibiting p88 phosphorylation and activity.</text>
</comment>
<comment type="subunit">
    <text evidence="1 3">Interacts with AURKA, GADD45GIP1 and PCNA (By similarity). Interacts with MAPK14.</text>
</comment>
<comment type="subcellular location">
    <subcellularLocation>
        <location evidence="1">Nucleus</location>
    </subcellularLocation>
</comment>
<comment type="induction">
    <text>By various types of DNA damage and growth arrest.</text>
</comment>
<comment type="similarity">
    <text evidence="4">Belongs to the GADD45 family.</text>
</comment>
<accession>P48316</accession>